<feature type="chain" id="PRO_1000044449" description="Sec-independent protein translocase protein TatA">
    <location>
        <begin position="1"/>
        <end position="68"/>
    </location>
</feature>
<feature type="transmembrane region" description="Helical" evidence="1">
    <location>
        <begin position="1"/>
        <end position="21"/>
    </location>
</feature>
<feature type="region of interest" description="Disordered" evidence="2">
    <location>
        <begin position="48"/>
        <end position="68"/>
    </location>
</feature>
<feature type="compositionally biased region" description="Basic and acidic residues" evidence="2">
    <location>
        <begin position="53"/>
        <end position="68"/>
    </location>
</feature>
<dbReference type="EMBL" id="CP000738">
    <property type="protein sequence ID" value="ABR60015.1"/>
    <property type="molecule type" value="Genomic_DNA"/>
</dbReference>
<dbReference type="RefSeq" id="WP_011975334.1">
    <property type="nucleotide sequence ID" value="NC_009636.1"/>
</dbReference>
<dbReference type="RefSeq" id="YP_001326850.1">
    <property type="nucleotide sequence ID" value="NC_009636.1"/>
</dbReference>
<dbReference type="SMR" id="A6U8N5"/>
<dbReference type="STRING" id="366394.Smed_1164"/>
<dbReference type="KEGG" id="smd:Smed_1164"/>
<dbReference type="PATRIC" id="fig|366394.8.peg.4290"/>
<dbReference type="eggNOG" id="COG1826">
    <property type="taxonomic scope" value="Bacteria"/>
</dbReference>
<dbReference type="HOGENOM" id="CLU_086034_5_0_5"/>
<dbReference type="OrthoDB" id="7161179at2"/>
<dbReference type="Proteomes" id="UP000001108">
    <property type="component" value="Chromosome"/>
</dbReference>
<dbReference type="GO" id="GO:0033281">
    <property type="term" value="C:TAT protein transport complex"/>
    <property type="evidence" value="ECO:0007669"/>
    <property type="project" value="UniProtKB-UniRule"/>
</dbReference>
<dbReference type="GO" id="GO:0008320">
    <property type="term" value="F:protein transmembrane transporter activity"/>
    <property type="evidence" value="ECO:0007669"/>
    <property type="project" value="UniProtKB-UniRule"/>
</dbReference>
<dbReference type="GO" id="GO:0043953">
    <property type="term" value="P:protein transport by the Tat complex"/>
    <property type="evidence" value="ECO:0007669"/>
    <property type="project" value="UniProtKB-UniRule"/>
</dbReference>
<dbReference type="Gene3D" id="1.20.5.3310">
    <property type="match status" value="1"/>
</dbReference>
<dbReference type="HAMAP" id="MF_00236">
    <property type="entry name" value="TatA_E"/>
    <property type="match status" value="1"/>
</dbReference>
<dbReference type="InterPro" id="IPR003369">
    <property type="entry name" value="TatA/B/E"/>
</dbReference>
<dbReference type="InterPro" id="IPR006312">
    <property type="entry name" value="TatA/E"/>
</dbReference>
<dbReference type="NCBIfam" id="NF001940">
    <property type="entry name" value="PRK00720.1"/>
    <property type="match status" value="1"/>
</dbReference>
<dbReference type="NCBIfam" id="TIGR01411">
    <property type="entry name" value="tatAE"/>
    <property type="match status" value="1"/>
</dbReference>
<dbReference type="PANTHER" id="PTHR42982">
    <property type="entry name" value="SEC-INDEPENDENT PROTEIN TRANSLOCASE PROTEIN TATA"/>
    <property type="match status" value="1"/>
</dbReference>
<dbReference type="PANTHER" id="PTHR42982:SF1">
    <property type="entry name" value="SEC-INDEPENDENT PROTEIN TRANSLOCASE PROTEIN TATA"/>
    <property type="match status" value="1"/>
</dbReference>
<dbReference type="Pfam" id="PF02416">
    <property type="entry name" value="TatA_B_E"/>
    <property type="match status" value="1"/>
</dbReference>
<protein>
    <recommendedName>
        <fullName evidence="1">Sec-independent protein translocase protein TatA</fullName>
    </recommendedName>
</protein>
<reference key="1">
    <citation type="submission" date="2007-06" db="EMBL/GenBank/DDBJ databases">
        <title>Complete sequence of Sinorhizobium medicae WSM419 chromosome.</title>
        <authorList>
            <consortium name="US DOE Joint Genome Institute"/>
            <person name="Copeland A."/>
            <person name="Lucas S."/>
            <person name="Lapidus A."/>
            <person name="Barry K."/>
            <person name="Glavina del Rio T."/>
            <person name="Dalin E."/>
            <person name="Tice H."/>
            <person name="Pitluck S."/>
            <person name="Chain P."/>
            <person name="Malfatti S."/>
            <person name="Shin M."/>
            <person name="Vergez L."/>
            <person name="Schmutz J."/>
            <person name="Larimer F."/>
            <person name="Land M."/>
            <person name="Hauser L."/>
            <person name="Kyrpides N."/>
            <person name="Mikhailova N."/>
            <person name="Reeve W.G."/>
            <person name="Richardson P."/>
        </authorList>
    </citation>
    <scope>NUCLEOTIDE SEQUENCE [LARGE SCALE GENOMIC DNA]</scope>
    <source>
        <strain>WSM419</strain>
    </source>
</reference>
<accession>A6U8N5</accession>
<keyword id="KW-0997">Cell inner membrane</keyword>
<keyword id="KW-1003">Cell membrane</keyword>
<keyword id="KW-0472">Membrane</keyword>
<keyword id="KW-0653">Protein transport</keyword>
<keyword id="KW-0811">Translocation</keyword>
<keyword id="KW-0812">Transmembrane</keyword>
<keyword id="KW-1133">Transmembrane helix</keyword>
<keyword id="KW-0813">Transport</keyword>
<organism>
    <name type="scientific">Sinorhizobium medicae (strain WSM419)</name>
    <name type="common">Ensifer medicae</name>
    <dbReference type="NCBI Taxonomy" id="366394"/>
    <lineage>
        <taxon>Bacteria</taxon>
        <taxon>Pseudomonadati</taxon>
        <taxon>Pseudomonadota</taxon>
        <taxon>Alphaproteobacteria</taxon>
        <taxon>Hyphomicrobiales</taxon>
        <taxon>Rhizobiaceae</taxon>
        <taxon>Sinorhizobium/Ensifer group</taxon>
        <taxon>Sinorhizobium</taxon>
    </lineage>
</organism>
<name>TATA_SINMW</name>
<proteinExistence type="inferred from homology"/>
<comment type="function">
    <text evidence="1">Part of the twin-arginine translocation (Tat) system that transports large folded proteins containing a characteristic twin-arginine motif in their signal peptide across membranes. TatA could form the protein-conducting channel of the Tat system.</text>
</comment>
<comment type="subunit">
    <text evidence="1">The Tat system comprises two distinct complexes: a TatABC complex, containing multiple copies of TatA, TatB and TatC subunits, and a separate TatA complex, containing only TatA subunits. Substrates initially bind to the TatABC complex, which probably triggers association of the separate TatA complex to form the active translocon.</text>
</comment>
<comment type="subcellular location">
    <subcellularLocation>
        <location evidence="1">Cell inner membrane</location>
        <topology evidence="1">Single-pass membrane protein</topology>
    </subcellularLocation>
</comment>
<comment type="similarity">
    <text evidence="1">Belongs to the TatA/E family.</text>
</comment>
<gene>
    <name evidence="1" type="primary">tatA</name>
    <name type="ordered locus">Smed_1164</name>
</gene>
<sequence length="68" mass="7444">MGSFSIWHWLIVLAVVLLLFGRGKIPELMGDVAKGIKNFKKGMSDEDAAAADKSIDGKTVDHKSDEVR</sequence>
<evidence type="ECO:0000255" key="1">
    <source>
        <dbReference type="HAMAP-Rule" id="MF_00236"/>
    </source>
</evidence>
<evidence type="ECO:0000256" key="2">
    <source>
        <dbReference type="SAM" id="MobiDB-lite"/>
    </source>
</evidence>